<proteinExistence type="inferred from homology"/>
<accession>Q0T8P4</accession>
<feature type="chain" id="PRO_0000300727" description="ATP-dependent Clp protease adapter protein ClpS">
    <location>
        <begin position="1"/>
        <end position="106"/>
    </location>
</feature>
<reference key="1">
    <citation type="journal article" date="2006" name="BMC Genomics">
        <title>Complete genome sequence of Shigella flexneri 5b and comparison with Shigella flexneri 2a.</title>
        <authorList>
            <person name="Nie H."/>
            <person name="Yang F."/>
            <person name="Zhang X."/>
            <person name="Yang J."/>
            <person name="Chen L."/>
            <person name="Wang J."/>
            <person name="Xiong Z."/>
            <person name="Peng J."/>
            <person name="Sun L."/>
            <person name="Dong J."/>
            <person name="Xue Y."/>
            <person name="Xu X."/>
            <person name="Chen S."/>
            <person name="Yao Z."/>
            <person name="Shen Y."/>
            <person name="Jin Q."/>
        </authorList>
    </citation>
    <scope>NUCLEOTIDE SEQUENCE [LARGE SCALE GENOMIC DNA]</scope>
    <source>
        <strain>8401</strain>
    </source>
</reference>
<organism>
    <name type="scientific">Shigella flexneri serotype 5b (strain 8401)</name>
    <dbReference type="NCBI Taxonomy" id="373384"/>
    <lineage>
        <taxon>Bacteria</taxon>
        <taxon>Pseudomonadati</taxon>
        <taxon>Pseudomonadota</taxon>
        <taxon>Gammaproteobacteria</taxon>
        <taxon>Enterobacterales</taxon>
        <taxon>Enterobacteriaceae</taxon>
        <taxon>Shigella</taxon>
    </lineage>
</organism>
<protein>
    <recommendedName>
        <fullName evidence="1">ATP-dependent Clp protease adapter protein ClpS</fullName>
    </recommendedName>
</protein>
<sequence length="106" mass="12179">MGKTNDWLDFDQLAEEKVRDALKPPSMYKVILVNDDYTPMEFVIDVLQKFFSYDVERATQLMLAVHYQGKAICGVFTAEVAETKVAMVNKYARENEHPLLCTLEKA</sequence>
<evidence type="ECO:0000255" key="1">
    <source>
        <dbReference type="HAMAP-Rule" id="MF_00302"/>
    </source>
</evidence>
<comment type="function">
    <text evidence="1">Involved in the modulation of the specificity of the ClpAP-mediated ATP-dependent protein degradation.</text>
</comment>
<comment type="subunit">
    <text evidence="1">Binds to the N-terminal domain of the chaperone ClpA.</text>
</comment>
<comment type="similarity">
    <text evidence="1">Belongs to the ClpS family.</text>
</comment>
<dbReference type="EMBL" id="CP000266">
    <property type="protein sequence ID" value="ABF03098.1"/>
    <property type="molecule type" value="Genomic_DNA"/>
</dbReference>
<dbReference type="RefSeq" id="WP_000520781.1">
    <property type="nucleotide sequence ID" value="NC_008258.1"/>
</dbReference>
<dbReference type="SMR" id="Q0T8P4"/>
<dbReference type="GeneID" id="86863397"/>
<dbReference type="KEGG" id="sfv:SFV_0872"/>
<dbReference type="HOGENOM" id="CLU_134358_2_1_6"/>
<dbReference type="Proteomes" id="UP000000659">
    <property type="component" value="Chromosome"/>
</dbReference>
<dbReference type="GO" id="GO:0030163">
    <property type="term" value="P:protein catabolic process"/>
    <property type="evidence" value="ECO:0007669"/>
    <property type="project" value="InterPro"/>
</dbReference>
<dbReference type="GO" id="GO:0006508">
    <property type="term" value="P:proteolysis"/>
    <property type="evidence" value="ECO:0007669"/>
    <property type="project" value="UniProtKB-UniRule"/>
</dbReference>
<dbReference type="FunFam" id="3.30.1390.10:FF:000002">
    <property type="entry name" value="ATP-dependent Clp protease adapter protein ClpS"/>
    <property type="match status" value="1"/>
</dbReference>
<dbReference type="Gene3D" id="3.30.1390.10">
    <property type="match status" value="1"/>
</dbReference>
<dbReference type="HAMAP" id="MF_00302">
    <property type="entry name" value="ClpS"/>
    <property type="match status" value="1"/>
</dbReference>
<dbReference type="InterPro" id="IPR022935">
    <property type="entry name" value="ClpS"/>
</dbReference>
<dbReference type="InterPro" id="IPR003769">
    <property type="entry name" value="ClpS_core"/>
</dbReference>
<dbReference type="InterPro" id="IPR014719">
    <property type="entry name" value="Ribosomal_bL12_C/ClpS-like"/>
</dbReference>
<dbReference type="NCBIfam" id="NF000670">
    <property type="entry name" value="PRK00033.1-3"/>
    <property type="match status" value="1"/>
</dbReference>
<dbReference type="NCBIfam" id="NF000672">
    <property type="entry name" value="PRK00033.1-5"/>
    <property type="match status" value="1"/>
</dbReference>
<dbReference type="PANTHER" id="PTHR33473:SF19">
    <property type="entry name" value="ATP-DEPENDENT CLP PROTEASE ADAPTER PROTEIN CLPS"/>
    <property type="match status" value="1"/>
</dbReference>
<dbReference type="PANTHER" id="PTHR33473">
    <property type="entry name" value="ATP-DEPENDENT CLP PROTEASE ADAPTER PROTEIN CLPS1, CHLOROPLASTIC"/>
    <property type="match status" value="1"/>
</dbReference>
<dbReference type="Pfam" id="PF02617">
    <property type="entry name" value="ClpS"/>
    <property type="match status" value="1"/>
</dbReference>
<dbReference type="SUPFAM" id="SSF54736">
    <property type="entry name" value="ClpS-like"/>
    <property type="match status" value="1"/>
</dbReference>
<name>CLPS_SHIF8</name>
<gene>
    <name evidence="1" type="primary">clpS</name>
    <name type="ordered locus">SFV_0872</name>
</gene>